<protein>
    <recommendedName>
        <fullName>Outer membrane lipoprotein virB7</fullName>
    </recommendedName>
</protein>
<accession>P0A3W4</accession>
<accession>P09780</accession>
<keyword id="KW-0998">Cell outer membrane</keyword>
<keyword id="KW-0192">Crown gall tumor</keyword>
<keyword id="KW-1015">Disulfide bond</keyword>
<keyword id="KW-0449">Lipoprotein</keyword>
<keyword id="KW-0472">Membrane</keyword>
<keyword id="KW-0564">Palmitate</keyword>
<keyword id="KW-0614">Plasmid</keyword>
<keyword id="KW-0732">Signal</keyword>
<keyword id="KW-0843">Virulence</keyword>
<dbReference type="EMBL" id="J03216">
    <property type="protein sequence ID" value="AAA88652.1"/>
    <property type="status" value="ALT_INIT"/>
    <property type="molecule type" value="Genomic_DNA"/>
</dbReference>
<dbReference type="EMBL" id="AF242881">
    <property type="protein sequence ID" value="AAF77167.1"/>
    <property type="molecule type" value="Genomic_DNA"/>
</dbReference>
<dbReference type="PIR" id="H28621">
    <property type="entry name" value="B7AGA6"/>
</dbReference>
<dbReference type="RefSeq" id="NP_059805.1">
    <property type="nucleotide sequence ID" value="NC_002377.1"/>
</dbReference>
<dbReference type="RefSeq" id="WP_010892493.1">
    <property type="nucleotide sequence ID" value="NZ_QSNU01000012.1"/>
</dbReference>
<dbReference type="DIP" id="DIP-335N"/>
<dbReference type="IntAct" id="P0A3W4">
    <property type="interactions" value="1"/>
</dbReference>
<dbReference type="TCDB" id="3.A.7.1.1">
    <property type="family name" value="the type iv (conjugal dna-protein transfer or virb) secretory pathway (ivsp) family"/>
</dbReference>
<dbReference type="PATRIC" id="fig|358.67.peg.5497"/>
<dbReference type="OrthoDB" id="7284987at2"/>
<dbReference type="GO" id="GO:0009279">
    <property type="term" value="C:cell outer membrane"/>
    <property type="evidence" value="ECO:0007669"/>
    <property type="project" value="UniProtKB-SubCell"/>
</dbReference>
<dbReference type="InterPro" id="IPR035545">
    <property type="entry name" value="VirB7"/>
</dbReference>
<dbReference type="NCBIfam" id="NF010433">
    <property type="entry name" value="PRK13859.1"/>
    <property type="match status" value="1"/>
</dbReference>
<dbReference type="Pfam" id="PF17413">
    <property type="entry name" value="VirB7"/>
    <property type="match status" value="1"/>
</dbReference>
<dbReference type="PROSITE" id="PS51257">
    <property type="entry name" value="PROKAR_LIPOPROTEIN"/>
    <property type="match status" value="1"/>
</dbReference>
<sequence length="55" mass="5930">MKYCLLCLVVALSGCQTNDTIASCKGPIFPLNVGRWQPTPSDLQLRNSGGRYDGA</sequence>
<name>VIRB7_RHIRD</name>
<evidence type="ECO:0000269" key="1">
    <source>
    </source>
</evidence>
<evidence type="ECO:0000269" key="2">
    <source>
    </source>
</evidence>
<evidence type="ECO:0000269" key="3">
    <source>
    </source>
</evidence>
<evidence type="ECO:0000305" key="4"/>
<reference key="1">
    <citation type="journal article" date="1988" name="J. Biol. Chem.">
        <title>Characterization of the virB operon from an Agrobacterium tumefaciens Ti plasmid.</title>
        <authorList>
            <person name="Ward J.E."/>
            <person name="Akiyoshi D.E."/>
            <person name="Regier D."/>
            <person name="Datta A."/>
            <person name="Gordon M.P."/>
            <person name="Nester E.W."/>
        </authorList>
    </citation>
    <scope>NUCLEOTIDE SEQUENCE [GENOMIC DNA]</scope>
</reference>
<reference key="2">
    <citation type="journal article" date="1990" name="J. Biol. Chem.">
        <authorList>
            <person name="Ward J.E."/>
            <person name="Akiyoshi D.E."/>
            <person name="Regier D."/>
            <person name="Datta A."/>
            <person name="Gordon M.P."/>
            <person name="Nester E.W."/>
        </authorList>
    </citation>
    <scope>ERRATUM OF PUBMED:3281947</scope>
    <scope>SEQUENCE REVISION</scope>
</reference>
<reference key="3">
    <citation type="journal article" date="1996" name="J. Bacteriol.">
        <title>The Agrobacterium tumefaciens virB7 gene product, a proposed component of the T-complex transport apparatus, is a membrane-associated lipoprotein exposed at the periplasmic surface.</title>
        <authorList>
            <person name="Fernandez D."/>
            <person name="Dang T.A.T."/>
            <person name="Spudich G.M."/>
            <person name="Zhou X.-R."/>
            <person name="Berger B.R."/>
            <person name="Christie P.J."/>
        </authorList>
    </citation>
    <scope>CHARACTERIZATION</scope>
    <scope>MUTAGENESIS OF CYS-15</scope>
    <source>
        <strain>A348</strain>
    </source>
</reference>
<reference key="4">
    <citation type="journal article" date="2001" name="J. Bacteriol.">
        <title>VirB7 lipoprotein is exocellular and associates with the Agrobacterium tumefaciens T pilus.</title>
        <authorList>
            <person name="Sagulenko V."/>
            <person name="Sagulenko E."/>
            <person name="Jakubowski S."/>
            <person name="Spudich E."/>
            <person name="Christie P.J."/>
        </authorList>
    </citation>
    <scope>CHARACTERIZATION</scope>
    <scope>MUTAGENESIS OF CYS-15 AND CYS-24</scope>
    <source>
        <strain>A348</strain>
    </source>
</reference>
<reference key="5">
    <citation type="journal article" date="1996" name="Proc. Natl. Acad. Sci. U.S.A.">
        <title>Agrobacterium tumefaciens VirB7 and VirB9 form a disulfide-linked protein complex.</title>
        <authorList>
            <person name="Anderson L.B."/>
            <person name="Hertzel A.V."/>
            <person name="Das A."/>
        </authorList>
    </citation>
    <scope>DISULFIDE BOND</scope>
    <scope>MUTAGENESIS OF CYS-15 AND CYS-24</scope>
</reference>
<organism>
    <name type="scientific">Rhizobium radiobacter</name>
    <name type="common">Agrobacterium tumefaciens</name>
    <name type="synonym">Agrobacterium radiobacter</name>
    <dbReference type="NCBI Taxonomy" id="358"/>
    <lineage>
        <taxon>Bacteria</taxon>
        <taxon>Pseudomonadati</taxon>
        <taxon>Pseudomonadota</taxon>
        <taxon>Alphaproteobacteria</taxon>
        <taxon>Hyphomicrobiales</taxon>
        <taxon>Rhizobiaceae</taxon>
        <taxon>Rhizobium/Agrobacterium group</taxon>
        <taxon>Agrobacterium</taxon>
        <taxon>Agrobacterium tumefaciens complex</taxon>
    </lineage>
</organism>
<feature type="signal peptide" evidence="4">
    <location>
        <begin position="1"/>
        <end position="14"/>
    </location>
</feature>
<feature type="chain" id="PRO_0000022671" description="Outer membrane lipoprotein virB7">
    <location>
        <begin position="15"/>
        <end position="55"/>
    </location>
</feature>
<feature type="lipid moiety-binding region" description="N-palmitoyl cysteine" evidence="4">
    <location>
        <position position="15"/>
    </location>
</feature>
<feature type="lipid moiety-binding region" description="S-diacylglycerol cysteine" evidence="4">
    <location>
        <position position="15"/>
    </location>
</feature>
<feature type="disulfide bond" description="Interchain (with C-262 in virB9); in heterodimeric form" evidence="3">
    <location>
        <position position="24"/>
    </location>
</feature>
<feature type="disulfide bond" description="Interchain; in homodimeric form" evidence="3">
    <location>
        <position position="24"/>
    </location>
</feature>
<feature type="mutagenesis site" description="Loss of activity and destabilization of the protein; no T-pilus formation; no loss of virB7-virB9 complex formation." evidence="1 2 3">
    <original>C</original>
    <variation>S</variation>
    <location>
        <position position="15"/>
    </location>
</feature>
<feature type="mutagenesis site" description="No homodimerization, and no virB7-virB9 complex formation; very low levels of T-pilus production." evidence="1 3">
    <original>C</original>
    <variation>S</variation>
    <location>
        <position position="24"/>
    </location>
</feature>
<comment type="function">
    <text>Is essential for the biogenesis of the T-pilus, which is required for virulence and T-DNA transfer to plant cells. When is associated with virB9, might function as a nucleation center for recruitment of VirB proteins during assembly of the T-DNA transfer machine.</text>
</comment>
<comment type="subunit">
    <text evidence="3">Homodimer and heterodimer of virB7 and virB9; disulfide-linked.</text>
</comment>
<comment type="subcellular location">
    <subcellularLocation>
        <location>Cell outer membrane</location>
        <topology>Lipid-anchor</topology>
    </subcellularLocation>
    <text>Also associated with the T-pilus when is a homodimer, possibly at the pilus base.</text>
</comment>
<comment type="miscellaneous">
    <text>Is protease-resistant.</text>
</comment>
<comment type="miscellaneous">
    <text>Both virB7 lipid modification and disulfide cross-linking are important for T-pilus assembly.</text>
</comment>
<comment type="sequence caution" evidence="4">
    <conflict type="erroneous initiation">
        <sequence resource="EMBL-CDS" id="AAA88652"/>
    </conflict>
</comment>
<gene>
    <name type="primary">virB7</name>
</gene>
<proteinExistence type="evidence at protein level"/>
<geneLocation type="plasmid">
    <name>pTiA6</name>
</geneLocation>